<organismHost>
    <name type="scientific">Ovis aries</name>
    <name type="common">Sheep</name>
    <dbReference type="NCBI Taxonomy" id="9940"/>
</organismHost>
<reference key="1">
    <citation type="journal article" date="1991" name="Virology">
        <title>Isolation of replication-competent molecular clones of visna virus.</title>
        <authorList>
            <person name="Staskus K.A."/>
            <person name="Retzel E.F."/>
            <person name="Lewis E.D."/>
            <person name="Wietgrefe S.W."/>
            <person name="Silsby J.L."/>
            <person name="Cyr S."/>
            <person name="Rank J.M."/>
            <person name="Haase A.T."/>
            <person name="Fast D."/>
            <person name="Geiser P.T."/>
            <person name="Harty J.T."/>
            <person name="Kong S.H."/>
            <person name="Cook R."/>
            <person name="Lahti C.J."/>
            <person name="Neufeld T.P."/>
            <person name="Porter T.E."/>
            <person name="Shoop E."/>
            <person name="Zachow K.R."/>
        </authorList>
    </citation>
    <scope>NUCLEOTIDE SEQUENCE</scope>
</reference>
<keyword id="KW-1035">Host cytoplasm</keyword>
<keyword id="KW-0946">Virion</keyword>
<comment type="subcellular location">
    <subcellularLocation>
        <location evidence="1">Host cytoplasm</location>
    </subcellularLocation>
    <subcellularLocation>
        <location evidence="1">Virion</location>
    </subcellularLocation>
</comment>
<comment type="similarity">
    <text evidence="2">Belongs to the ovine/caprine lentivirus group Vif protein family.</text>
</comment>
<comment type="sequence caution" evidence="2">
    <conflict type="erroneous initiation">
        <sequence resource="EMBL-CDS" id="AAA17530"/>
    </conflict>
</comment>
<accession>P69716</accession>
<accession>P03403</accession>
<protein>
    <recommendedName>
        <fullName>Virion infectivity factor</fullName>
    </recommendedName>
    <alternativeName>
        <fullName>Q protein</fullName>
    </alternativeName>
</protein>
<dbReference type="EMBL" id="M60610">
    <property type="protein sequence ID" value="AAA17530.1"/>
    <property type="status" value="ALT_INIT"/>
    <property type="molecule type" value="Unassigned_DNA"/>
</dbReference>
<dbReference type="SMR" id="P69716"/>
<dbReference type="GO" id="GO:0030430">
    <property type="term" value="C:host cell cytoplasm"/>
    <property type="evidence" value="ECO:0007669"/>
    <property type="project" value="UniProtKB-SubCell"/>
</dbReference>
<dbReference type="GO" id="GO:0044423">
    <property type="term" value="C:virion component"/>
    <property type="evidence" value="ECO:0007669"/>
    <property type="project" value="UniProtKB-KW"/>
</dbReference>
<dbReference type="InterPro" id="IPR009979">
    <property type="entry name" value="Lenti_VIF_2"/>
</dbReference>
<dbReference type="Pfam" id="PF07401">
    <property type="entry name" value="Lenti_VIF_2"/>
    <property type="match status" value="1"/>
</dbReference>
<evidence type="ECO:0000250" key="1"/>
<evidence type="ECO:0000305" key="2"/>
<sequence>MLSSYRHQKKYKKNKAREIGPQLPLWAWKETAFSINQEPYWYSTIRLQGLMWNKRGHKLMFVKENQGYEYWETSGKQWKMEIRRDLDLIAQINFRNAWQYKSQGEWKTIGVWYESPGDYKGKENQFWFHWRIALCSCNKTRWDIREFMIGKHRWDLCKSCIQGEIVKNTNPRSLQRLALLHLAKDHVFQVMPLWRARRVTVQKFPWCRSPMGYTIPWSLQECWEMESIFE</sequence>
<feature type="chain" id="PRO_0000085506" description="Virion infectivity factor">
    <location>
        <begin position="1"/>
        <end position="230"/>
    </location>
</feature>
<proteinExistence type="inferred from homology"/>
<organism>
    <name type="scientific">Maedi visna virus (strain 1514 / clone LV1-1KS2)</name>
    <name type="common">MVV</name>
    <name type="synonym">Visna lentivirus</name>
    <dbReference type="NCBI Taxonomy" id="11744"/>
    <lineage>
        <taxon>Viruses</taxon>
        <taxon>Riboviria</taxon>
        <taxon>Pararnavirae</taxon>
        <taxon>Artverviricota</taxon>
        <taxon>Revtraviricetes</taxon>
        <taxon>Ortervirales</taxon>
        <taxon>Retroviridae</taxon>
        <taxon>Orthoretrovirinae</taxon>
        <taxon>Lentivirus</taxon>
        <taxon>Visna-maedi virus</taxon>
    </lineage>
</organism>
<name>VIF_VILV2</name>
<gene>
    <name type="primary">vif</name>
</gene>